<organism>
    <name type="scientific">Schizosaccharomyces pombe (strain 972 / ATCC 24843)</name>
    <name type="common">Fission yeast</name>
    <dbReference type="NCBI Taxonomy" id="284812"/>
    <lineage>
        <taxon>Eukaryota</taxon>
        <taxon>Fungi</taxon>
        <taxon>Dikarya</taxon>
        <taxon>Ascomycota</taxon>
        <taxon>Taphrinomycotina</taxon>
        <taxon>Schizosaccharomycetes</taxon>
        <taxon>Schizosaccharomycetales</taxon>
        <taxon>Schizosaccharomycetaceae</taxon>
        <taxon>Schizosaccharomyces</taxon>
    </lineage>
</organism>
<dbReference type="EMBL" id="CU329671">
    <property type="protein sequence ID" value="CAB59803.1"/>
    <property type="molecule type" value="Genomic_DNA"/>
</dbReference>
<dbReference type="PIR" id="T39328">
    <property type="entry name" value="T39328"/>
</dbReference>
<dbReference type="RefSeq" id="NP_595719.1">
    <property type="nucleotide sequence ID" value="NM_001021617.3"/>
</dbReference>
<dbReference type="SMR" id="Q9USZ8"/>
<dbReference type="BioGRID" id="276483">
    <property type="interactions" value="37"/>
</dbReference>
<dbReference type="FunCoup" id="Q9USZ8">
    <property type="interactions" value="250"/>
</dbReference>
<dbReference type="STRING" id="284812.Q9USZ8"/>
<dbReference type="iPTMnet" id="Q9USZ8"/>
<dbReference type="PaxDb" id="4896-SPBC11G11.01.1"/>
<dbReference type="EnsemblFungi" id="SPBC11G11.01.1">
    <property type="protein sequence ID" value="SPBC11G11.01.1:pep"/>
    <property type="gene ID" value="SPBC11G11.01"/>
</dbReference>
<dbReference type="GeneID" id="2539939"/>
<dbReference type="KEGG" id="spo:2539939"/>
<dbReference type="PomBase" id="SPBC11G11.01">
    <property type="gene designation" value="fis1"/>
</dbReference>
<dbReference type="VEuPathDB" id="FungiDB:SPBC11G11.01"/>
<dbReference type="eggNOG" id="KOG3364">
    <property type="taxonomic scope" value="Eukaryota"/>
</dbReference>
<dbReference type="HOGENOM" id="CLU_104368_2_0_1"/>
<dbReference type="InParanoid" id="Q9USZ8"/>
<dbReference type="OMA" id="QFNYAWG"/>
<dbReference type="PhylomeDB" id="Q9USZ8"/>
<dbReference type="Reactome" id="R-SPO-9603798">
    <property type="pathway name" value="Class I peroxisomal membrane protein import"/>
</dbReference>
<dbReference type="PRO" id="PR:Q9USZ8"/>
<dbReference type="Proteomes" id="UP000002485">
    <property type="component" value="Chromosome II"/>
</dbReference>
<dbReference type="GO" id="GO:0005737">
    <property type="term" value="C:cytoplasm"/>
    <property type="evidence" value="ECO:0007005"/>
    <property type="project" value="PomBase"/>
</dbReference>
<dbReference type="GO" id="GO:0032473">
    <property type="term" value="C:cytoplasmic side of mitochondrial outer membrane"/>
    <property type="evidence" value="ECO:0000304"/>
    <property type="project" value="PomBase"/>
</dbReference>
<dbReference type="GO" id="GO:0005741">
    <property type="term" value="C:mitochondrial outer membrane"/>
    <property type="evidence" value="ECO:0000318"/>
    <property type="project" value="GO_Central"/>
</dbReference>
<dbReference type="GO" id="GO:0005778">
    <property type="term" value="C:peroxisomal membrane"/>
    <property type="evidence" value="ECO:0000318"/>
    <property type="project" value="GO_Central"/>
</dbReference>
<dbReference type="GO" id="GO:0008289">
    <property type="term" value="F:lipid binding"/>
    <property type="evidence" value="ECO:0000318"/>
    <property type="project" value="GO_Central"/>
</dbReference>
<dbReference type="GO" id="GO:0060090">
    <property type="term" value="F:molecular adaptor activity"/>
    <property type="evidence" value="ECO:0000318"/>
    <property type="project" value="GO_Central"/>
</dbReference>
<dbReference type="GO" id="GO:0043495">
    <property type="term" value="F:protein-membrane adaptor activity"/>
    <property type="evidence" value="ECO:0000304"/>
    <property type="project" value="PomBase"/>
</dbReference>
<dbReference type="GO" id="GO:0000266">
    <property type="term" value="P:mitochondrial fission"/>
    <property type="evidence" value="ECO:0000318"/>
    <property type="project" value="GO_Central"/>
</dbReference>
<dbReference type="GO" id="GO:0090149">
    <property type="term" value="P:mitochondrial membrane fission"/>
    <property type="evidence" value="ECO:0000250"/>
    <property type="project" value="PomBase"/>
</dbReference>
<dbReference type="GO" id="GO:0016559">
    <property type="term" value="P:peroxisome fission"/>
    <property type="evidence" value="ECO:0000318"/>
    <property type="project" value="GO_Central"/>
</dbReference>
<dbReference type="CDD" id="cd12212">
    <property type="entry name" value="Fis1"/>
    <property type="match status" value="1"/>
</dbReference>
<dbReference type="Gene3D" id="1.25.40.10">
    <property type="entry name" value="Tetratricopeptide repeat domain"/>
    <property type="match status" value="1"/>
</dbReference>
<dbReference type="InterPro" id="IPR016543">
    <property type="entry name" value="Fis1"/>
</dbReference>
<dbReference type="InterPro" id="IPR033745">
    <property type="entry name" value="Fis1_cytosol"/>
</dbReference>
<dbReference type="InterPro" id="IPR028061">
    <property type="entry name" value="Fis1_TPR_C"/>
</dbReference>
<dbReference type="InterPro" id="IPR028058">
    <property type="entry name" value="Fis1_TPR_N"/>
</dbReference>
<dbReference type="InterPro" id="IPR011990">
    <property type="entry name" value="TPR-like_helical_dom_sf"/>
</dbReference>
<dbReference type="PANTHER" id="PTHR13247:SF0">
    <property type="entry name" value="MITOCHONDRIAL FISSION 1 PROTEIN"/>
    <property type="match status" value="1"/>
</dbReference>
<dbReference type="PANTHER" id="PTHR13247">
    <property type="entry name" value="TETRATRICOPEPTIDE REPEAT PROTEIN 11 TPR REPEAT PROTEIN 11"/>
    <property type="match status" value="1"/>
</dbReference>
<dbReference type="Pfam" id="PF14853">
    <property type="entry name" value="Fis1_TPR_C"/>
    <property type="match status" value="1"/>
</dbReference>
<dbReference type="Pfam" id="PF14852">
    <property type="entry name" value="Fis1_TPR_N"/>
    <property type="match status" value="1"/>
</dbReference>
<dbReference type="PIRSF" id="PIRSF008835">
    <property type="entry name" value="TPR_repeat_11_Fis1"/>
    <property type="match status" value="1"/>
</dbReference>
<dbReference type="SUPFAM" id="SSF48452">
    <property type="entry name" value="TPR-like"/>
    <property type="match status" value="1"/>
</dbReference>
<accession>Q9USZ8</accession>
<sequence length="160" mass="18329">MTEKHTLRLADPSAIDSIISVDEFLQIKEQYDAEQPLITLQTKFNLAWALVRSDSTQHVQQGLSLFCSIYKDSPERRLECLYYIALSHYKLKQYEESRRYLNMLLSKDPNSPEALKLKNRLYDAVTKEGYIGMVVVAGAVVSVAALVGWASKRLFSKRRP</sequence>
<reference key="1">
    <citation type="journal article" date="2002" name="Nature">
        <title>The genome sequence of Schizosaccharomyces pombe.</title>
        <authorList>
            <person name="Wood V."/>
            <person name="Gwilliam R."/>
            <person name="Rajandream M.A."/>
            <person name="Lyne M.H."/>
            <person name="Lyne R."/>
            <person name="Stewart A."/>
            <person name="Sgouros J.G."/>
            <person name="Peat N."/>
            <person name="Hayles J."/>
            <person name="Baker S.G."/>
            <person name="Basham D."/>
            <person name="Bowman S."/>
            <person name="Brooks K."/>
            <person name="Brown D."/>
            <person name="Brown S."/>
            <person name="Chillingworth T."/>
            <person name="Churcher C.M."/>
            <person name="Collins M."/>
            <person name="Connor R."/>
            <person name="Cronin A."/>
            <person name="Davis P."/>
            <person name="Feltwell T."/>
            <person name="Fraser A."/>
            <person name="Gentles S."/>
            <person name="Goble A."/>
            <person name="Hamlin N."/>
            <person name="Harris D.E."/>
            <person name="Hidalgo J."/>
            <person name="Hodgson G."/>
            <person name="Holroyd S."/>
            <person name="Hornsby T."/>
            <person name="Howarth S."/>
            <person name="Huckle E.J."/>
            <person name="Hunt S."/>
            <person name="Jagels K."/>
            <person name="James K.D."/>
            <person name="Jones L."/>
            <person name="Jones M."/>
            <person name="Leather S."/>
            <person name="McDonald S."/>
            <person name="McLean J."/>
            <person name="Mooney P."/>
            <person name="Moule S."/>
            <person name="Mungall K.L."/>
            <person name="Murphy L.D."/>
            <person name="Niblett D."/>
            <person name="Odell C."/>
            <person name="Oliver K."/>
            <person name="O'Neil S."/>
            <person name="Pearson D."/>
            <person name="Quail M.A."/>
            <person name="Rabbinowitsch E."/>
            <person name="Rutherford K.M."/>
            <person name="Rutter S."/>
            <person name="Saunders D."/>
            <person name="Seeger K."/>
            <person name="Sharp S."/>
            <person name="Skelton J."/>
            <person name="Simmonds M.N."/>
            <person name="Squares R."/>
            <person name="Squares S."/>
            <person name="Stevens K."/>
            <person name="Taylor K."/>
            <person name="Taylor R.G."/>
            <person name="Tivey A."/>
            <person name="Walsh S.V."/>
            <person name="Warren T."/>
            <person name="Whitehead S."/>
            <person name="Woodward J.R."/>
            <person name="Volckaert G."/>
            <person name="Aert R."/>
            <person name="Robben J."/>
            <person name="Grymonprez B."/>
            <person name="Weltjens I."/>
            <person name="Vanstreels E."/>
            <person name="Rieger M."/>
            <person name="Schaefer M."/>
            <person name="Mueller-Auer S."/>
            <person name="Gabel C."/>
            <person name="Fuchs M."/>
            <person name="Duesterhoeft A."/>
            <person name="Fritzc C."/>
            <person name="Holzer E."/>
            <person name="Moestl D."/>
            <person name="Hilbert H."/>
            <person name="Borzym K."/>
            <person name="Langer I."/>
            <person name="Beck A."/>
            <person name="Lehrach H."/>
            <person name="Reinhardt R."/>
            <person name="Pohl T.M."/>
            <person name="Eger P."/>
            <person name="Zimmermann W."/>
            <person name="Wedler H."/>
            <person name="Wambutt R."/>
            <person name="Purnelle B."/>
            <person name="Goffeau A."/>
            <person name="Cadieu E."/>
            <person name="Dreano S."/>
            <person name="Gloux S."/>
            <person name="Lelaure V."/>
            <person name="Mottier S."/>
            <person name="Galibert F."/>
            <person name="Aves S.J."/>
            <person name="Xiang Z."/>
            <person name="Hunt C."/>
            <person name="Moore K."/>
            <person name="Hurst S.M."/>
            <person name="Lucas M."/>
            <person name="Rochet M."/>
            <person name="Gaillardin C."/>
            <person name="Tallada V.A."/>
            <person name="Garzon A."/>
            <person name="Thode G."/>
            <person name="Daga R.R."/>
            <person name="Cruzado L."/>
            <person name="Jimenez J."/>
            <person name="Sanchez M."/>
            <person name="del Rey F."/>
            <person name="Benito J."/>
            <person name="Dominguez A."/>
            <person name="Revuelta J.L."/>
            <person name="Moreno S."/>
            <person name="Armstrong J."/>
            <person name="Forsburg S.L."/>
            <person name="Cerutti L."/>
            <person name="Lowe T."/>
            <person name="McCombie W.R."/>
            <person name="Paulsen I."/>
            <person name="Potashkin J."/>
            <person name="Shpakovski G.V."/>
            <person name="Ussery D."/>
            <person name="Barrell B.G."/>
            <person name="Nurse P."/>
        </authorList>
    </citation>
    <scope>NUCLEOTIDE SEQUENCE [LARGE SCALE GENOMIC DNA]</scope>
    <source>
        <strain>972 / ATCC 24843</strain>
    </source>
</reference>
<reference key="2">
    <citation type="journal article" date="2006" name="Nat. Biotechnol.">
        <title>ORFeome cloning and global analysis of protein localization in the fission yeast Schizosaccharomyces pombe.</title>
        <authorList>
            <person name="Matsuyama A."/>
            <person name="Arai R."/>
            <person name="Yashiroda Y."/>
            <person name="Shirai A."/>
            <person name="Kamata A."/>
            <person name="Sekido S."/>
            <person name="Kobayashi Y."/>
            <person name="Hashimoto A."/>
            <person name="Hamamoto M."/>
            <person name="Hiraoka Y."/>
            <person name="Horinouchi S."/>
            <person name="Yoshida M."/>
        </authorList>
    </citation>
    <scope>SUBCELLULAR LOCATION [LARGE SCALE ANALYSIS]</scope>
</reference>
<protein>
    <recommendedName>
        <fullName>Mitochondrial fission 1 protein</fullName>
    </recommendedName>
</protein>
<name>FIS1_SCHPO</name>
<proteinExistence type="inferred from homology"/>
<keyword id="KW-0472">Membrane</keyword>
<keyword id="KW-0496">Mitochondrion</keyword>
<keyword id="KW-1000">Mitochondrion outer membrane</keyword>
<keyword id="KW-1185">Reference proteome</keyword>
<keyword id="KW-0677">Repeat</keyword>
<keyword id="KW-0802">TPR repeat</keyword>
<keyword id="KW-0812">Transmembrane</keyword>
<keyword id="KW-1133">Transmembrane helix</keyword>
<gene>
    <name type="primary">fis1</name>
    <name type="ORF">SPBC11G11.01</name>
</gene>
<feature type="chain" id="PRO_0000256189" description="Mitochondrial fission 1 protein">
    <location>
        <begin position="1"/>
        <end position="160"/>
    </location>
</feature>
<feature type="topological domain" description="Cytoplasmic" evidence="2">
    <location>
        <begin position="1"/>
        <end position="129"/>
    </location>
</feature>
<feature type="transmembrane region" description="Helical" evidence="2">
    <location>
        <begin position="130"/>
        <end position="150"/>
    </location>
</feature>
<feature type="topological domain" description="Mitochondrial intermembrane" evidence="2">
    <location>
        <begin position="151"/>
        <end position="160"/>
    </location>
</feature>
<feature type="repeat" description="TPR">
    <location>
        <begin position="78"/>
        <end position="111"/>
    </location>
</feature>
<comment type="function">
    <text evidence="1">Has a role in mitochondrial fission. Has a role in outer membrane fission but not matrix separation (By similarity).</text>
</comment>
<comment type="subcellular location">
    <subcellularLocation>
        <location evidence="1">Mitochondrion outer membrane</location>
        <topology evidence="1">Single-pass membrane protein</topology>
    </subcellularLocation>
</comment>
<comment type="domain">
    <text evidence="1">The C-terminus is required for mitochondrial localization, while the N-terminus is necessary for mitochondrial fission.</text>
</comment>
<comment type="similarity">
    <text evidence="3">Belongs to the FIS1 family.</text>
</comment>
<evidence type="ECO:0000250" key="1"/>
<evidence type="ECO:0000255" key="2"/>
<evidence type="ECO:0000305" key="3"/>